<sequence>MNEANSAMSDARRATIERTTGETSVTLTLTIDGSGRADIQTGIGFLDHMLTLWAKHGLFDLTVRAHGDLHVDEHHTAEDVCICLGRALDQALGTRAGIVRTAHSFVPMDEALALVAVDLGGRPYCVMQAEFATPRVGQLGTDLIGHLFESIAFNGRFNLHAQVLYGRNDHHKIEALFKACGRALDAATRYDPRLGGTIPSTKGVL</sequence>
<reference key="1">
    <citation type="submission" date="2008-12" db="EMBL/GenBank/DDBJ databases">
        <title>Complete sequence of Chloroflexus aggregans DSM 9485.</title>
        <authorList>
            <consortium name="US DOE Joint Genome Institute"/>
            <person name="Lucas S."/>
            <person name="Copeland A."/>
            <person name="Lapidus A."/>
            <person name="Glavina del Rio T."/>
            <person name="Dalin E."/>
            <person name="Tice H."/>
            <person name="Pitluck S."/>
            <person name="Foster B."/>
            <person name="Larimer F."/>
            <person name="Land M."/>
            <person name="Hauser L."/>
            <person name="Kyrpides N."/>
            <person name="Mikhailova N."/>
            <person name="Bryant D.A."/>
            <person name="Richardson P."/>
        </authorList>
    </citation>
    <scope>NUCLEOTIDE SEQUENCE [LARGE SCALE GENOMIC DNA]</scope>
    <source>
        <strain>MD-66 / DSM 9485</strain>
    </source>
</reference>
<comment type="catalytic activity">
    <reaction evidence="1">
        <text>D-erythro-1-(imidazol-4-yl)glycerol 3-phosphate = 3-(imidazol-4-yl)-2-oxopropyl phosphate + H2O</text>
        <dbReference type="Rhea" id="RHEA:11040"/>
        <dbReference type="ChEBI" id="CHEBI:15377"/>
        <dbReference type="ChEBI" id="CHEBI:57766"/>
        <dbReference type="ChEBI" id="CHEBI:58278"/>
        <dbReference type="EC" id="4.2.1.19"/>
    </reaction>
</comment>
<comment type="pathway">
    <text evidence="1">Amino-acid biosynthesis; L-histidine biosynthesis; L-histidine from 5-phospho-alpha-D-ribose 1-diphosphate: step 6/9.</text>
</comment>
<comment type="subcellular location">
    <subcellularLocation>
        <location evidence="1">Cytoplasm</location>
    </subcellularLocation>
</comment>
<comment type="similarity">
    <text evidence="1">Belongs to the imidazoleglycerol-phosphate dehydratase family.</text>
</comment>
<dbReference type="EC" id="4.2.1.19" evidence="1"/>
<dbReference type="EMBL" id="CP001337">
    <property type="protein sequence ID" value="ACL25453.1"/>
    <property type="molecule type" value="Genomic_DNA"/>
</dbReference>
<dbReference type="SMR" id="B8G451"/>
<dbReference type="STRING" id="326427.Cagg_2584"/>
<dbReference type="KEGG" id="cag:Cagg_2584"/>
<dbReference type="eggNOG" id="COG0131">
    <property type="taxonomic scope" value="Bacteria"/>
</dbReference>
<dbReference type="HOGENOM" id="CLU_044308_3_0_0"/>
<dbReference type="OrthoDB" id="9790411at2"/>
<dbReference type="UniPathway" id="UPA00031">
    <property type="reaction ID" value="UER00011"/>
</dbReference>
<dbReference type="Proteomes" id="UP000002508">
    <property type="component" value="Chromosome"/>
</dbReference>
<dbReference type="GO" id="GO:0005737">
    <property type="term" value="C:cytoplasm"/>
    <property type="evidence" value="ECO:0007669"/>
    <property type="project" value="UniProtKB-SubCell"/>
</dbReference>
<dbReference type="GO" id="GO:0004424">
    <property type="term" value="F:imidazoleglycerol-phosphate dehydratase activity"/>
    <property type="evidence" value="ECO:0007669"/>
    <property type="project" value="UniProtKB-UniRule"/>
</dbReference>
<dbReference type="GO" id="GO:0000105">
    <property type="term" value="P:L-histidine biosynthetic process"/>
    <property type="evidence" value="ECO:0007669"/>
    <property type="project" value="UniProtKB-UniRule"/>
</dbReference>
<dbReference type="CDD" id="cd07914">
    <property type="entry name" value="IGPD"/>
    <property type="match status" value="1"/>
</dbReference>
<dbReference type="FunFam" id="3.30.230.40:FF:000001">
    <property type="entry name" value="Imidazoleglycerol-phosphate dehydratase HisB"/>
    <property type="match status" value="1"/>
</dbReference>
<dbReference type="FunFam" id="3.30.230.40:FF:000003">
    <property type="entry name" value="Imidazoleglycerol-phosphate dehydratase HisB"/>
    <property type="match status" value="1"/>
</dbReference>
<dbReference type="Gene3D" id="3.30.230.40">
    <property type="entry name" value="Imidazole glycerol phosphate dehydratase, domain 1"/>
    <property type="match status" value="2"/>
</dbReference>
<dbReference type="HAMAP" id="MF_00076">
    <property type="entry name" value="HisB"/>
    <property type="match status" value="1"/>
</dbReference>
<dbReference type="InterPro" id="IPR038494">
    <property type="entry name" value="IGPD_sf"/>
</dbReference>
<dbReference type="InterPro" id="IPR000807">
    <property type="entry name" value="ImidazoleglycerolP_deHydtase"/>
</dbReference>
<dbReference type="InterPro" id="IPR020565">
    <property type="entry name" value="ImidazoleglycerP_deHydtase_CS"/>
</dbReference>
<dbReference type="InterPro" id="IPR020568">
    <property type="entry name" value="Ribosomal_Su5_D2-typ_SF"/>
</dbReference>
<dbReference type="NCBIfam" id="NF002111">
    <property type="entry name" value="PRK00951.2-1"/>
    <property type="match status" value="1"/>
</dbReference>
<dbReference type="NCBIfam" id="NF002114">
    <property type="entry name" value="PRK00951.2-4"/>
    <property type="match status" value="1"/>
</dbReference>
<dbReference type="NCBIfam" id="NF002116">
    <property type="entry name" value="PRK00951.2-6"/>
    <property type="match status" value="1"/>
</dbReference>
<dbReference type="PANTHER" id="PTHR23133:SF2">
    <property type="entry name" value="IMIDAZOLEGLYCEROL-PHOSPHATE DEHYDRATASE"/>
    <property type="match status" value="1"/>
</dbReference>
<dbReference type="PANTHER" id="PTHR23133">
    <property type="entry name" value="IMIDAZOLEGLYCEROL-PHOSPHATE DEHYDRATASE HIS7"/>
    <property type="match status" value="1"/>
</dbReference>
<dbReference type="Pfam" id="PF00475">
    <property type="entry name" value="IGPD"/>
    <property type="match status" value="1"/>
</dbReference>
<dbReference type="SUPFAM" id="SSF54211">
    <property type="entry name" value="Ribosomal protein S5 domain 2-like"/>
    <property type="match status" value="2"/>
</dbReference>
<dbReference type="PROSITE" id="PS00954">
    <property type="entry name" value="IGP_DEHYDRATASE_1"/>
    <property type="match status" value="1"/>
</dbReference>
<dbReference type="PROSITE" id="PS00955">
    <property type="entry name" value="IGP_DEHYDRATASE_2"/>
    <property type="match status" value="1"/>
</dbReference>
<gene>
    <name evidence="1" type="primary">hisB</name>
    <name type="ordered locus">Cagg_2584</name>
</gene>
<accession>B8G451</accession>
<organism>
    <name type="scientific">Chloroflexus aggregans (strain MD-66 / DSM 9485)</name>
    <dbReference type="NCBI Taxonomy" id="326427"/>
    <lineage>
        <taxon>Bacteria</taxon>
        <taxon>Bacillati</taxon>
        <taxon>Chloroflexota</taxon>
        <taxon>Chloroflexia</taxon>
        <taxon>Chloroflexales</taxon>
        <taxon>Chloroflexineae</taxon>
        <taxon>Chloroflexaceae</taxon>
        <taxon>Chloroflexus</taxon>
    </lineage>
</organism>
<protein>
    <recommendedName>
        <fullName evidence="1">Imidazoleglycerol-phosphate dehydratase</fullName>
        <shortName evidence="1">IGPD</shortName>
        <ecNumber evidence="1">4.2.1.19</ecNumber>
    </recommendedName>
</protein>
<feature type="chain" id="PRO_1000118220" description="Imidazoleglycerol-phosphate dehydratase">
    <location>
        <begin position="1"/>
        <end position="205"/>
    </location>
</feature>
<keyword id="KW-0028">Amino-acid biosynthesis</keyword>
<keyword id="KW-0963">Cytoplasm</keyword>
<keyword id="KW-0368">Histidine biosynthesis</keyword>
<keyword id="KW-0456">Lyase</keyword>
<name>HIS7_CHLAD</name>
<proteinExistence type="inferred from homology"/>
<evidence type="ECO:0000255" key="1">
    <source>
        <dbReference type="HAMAP-Rule" id="MF_00076"/>
    </source>
</evidence>